<keyword id="KW-0067">ATP-binding</keyword>
<keyword id="KW-1003">Cell membrane</keyword>
<keyword id="KW-0406">Ion transport</keyword>
<keyword id="KW-0460">Magnesium</keyword>
<keyword id="KW-0472">Membrane</keyword>
<keyword id="KW-0479">Metal-binding</keyword>
<keyword id="KW-0547">Nucleotide-binding</keyword>
<keyword id="KW-0597">Phosphoprotein</keyword>
<keyword id="KW-0630">Potassium</keyword>
<keyword id="KW-0633">Potassium transport</keyword>
<keyword id="KW-1185">Reference proteome</keyword>
<keyword id="KW-1278">Translocase</keyword>
<keyword id="KW-0812">Transmembrane</keyword>
<keyword id="KW-1133">Transmembrane helix</keyword>
<keyword id="KW-0813">Transport</keyword>
<dbReference type="EC" id="7.2.2.6" evidence="1"/>
<dbReference type="EMBL" id="CP000029">
    <property type="protein sequence ID" value="AAW53381.1"/>
    <property type="molecule type" value="Genomic_DNA"/>
</dbReference>
<dbReference type="RefSeq" id="WP_000852430.1">
    <property type="nucleotide sequence ID" value="NC_002976.3"/>
</dbReference>
<dbReference type="SMR" id="Q5HK64"/>
<dbReference type="STRING" id="176279.SERP2486"/>
<dbReference type="KEGG" id="ser:SERP2486"/>
<dbReference type="eggNOG" id="COG2216">
    <property type="taxonomic scope" value="Bacteria"/>
</dbReference>
<dbReference type="HOGENOM" id="CLU_025728_2_0_9"/>
<dbReference type="Proteomes" id="UP000000531">
    <property type="component" value="Chromosome"/>
</dbReference>
<dbReference type="GO" id="GO:0005886">
    <property type="term" value="C:plasma membrane"/>
    <property type="evidence" value="ECO:0007669"/>
    <property type="project" value="UniProtKB-SubCell"/>
</dbReference>
<dbReference type="GO" id="GO:0005524">
    <property type="term" value="F:ATP binding"/>
    <property type="evidence" value="ECO:0007669"/>
    <property type="project" value="UniProtKB-UniRule"/>
</dbReference>
<dbReference type="GO" id="GO:0016887">
    <property type="term" value="F:ATP hydrolysis activity"/>
    <property type="evidence" value="ECO:0007669"/>
    <property type="project" value="InterPro"/>
</dbReference>
<dbReference type="GO" id="GO:0000287">
    <property type="term" value="F:magnesium ion binding"/>
    <property type="evidence" value="ECO:0007669"/>
    <property type="project" value="UniProtKB-UniRule"/>
</dbReference>
<dbReference type="GO" id="GO:0008556">
    <property type="term" value="F:P-type potassium transmembrane transporter activity"/>
    <property type="evidence" value="ECO:0007669"/>
    <property type="project" value="UniProtKB-UniRule"/>
</dbReference>
<dbReference type="FunFam" id="2.70.150.10:FF:000010">
    <property type="entry name" value="Potassium-transporting ATPase ATP-binding subunit"/>
    <property type="match status" value="1"/>
</dbReference>
<dbReference type="FunFam" id="3.40.1110.10:FF:000007">
    <property type="entry name" value="Potassium-transporting ATPase ATP-binding subunit"/>
    <property type="match status" value="1"/>
</dbReference>
<dbReference type="Gene3D" id="3.40.1110.10">
    <property type="entry name" value="Calcium-transporting ATPase, cytoplasmic domain N"/>
    <property type="match status" value="1"/>
</dbReference>
<dbReference type="Gene3D" id="2.70.150.10">
    <property type="entry name" value="Calcium-transporting ATPase, cytoplasmic transduction domain A"/>
    <property type="match status" value="1"/>
</dbReference>
<dbReference type="Gene3D" id="3.40.50.1000">
    <property type="entry name" value="HAD superfamily/HAD-like"/>
    <property type="match status" value="1"/>
</dbReference>
<dbReference type="HAMAP" id="MF_00285">
    <property type="entry name" value="KdpB"/>
    <property type="match status" value="1"/>
</dbReference>
<dbReference type="InterPro" id="IPR023299">
    <property type="entry name" value="ATPase_P-typ_cyto_dom_N"/>
</dbReference>
<dbReference type="InterPro" id="IPR018303">
    <property type="entry name" value="ATPase_P-typ_P_site"/>
</dbReference>
<dbReference type="InterPro" id="IPR023298">
    <property type="entry name" value="ATPase_P-typ_TM_dom_sf"/>
</dbReference>
<dbReference type="InterPro" id="IPR008250">
    <property type="entry name" value="ATPase_P-typ_transduc_dom_A_sf"/>
</dbReference>
<dbReference type="InterPro" id="IPR036412">
    <property type="entry name" value="HAD-like_sf"/>
</dbReference>
<dbReference type="InterPro" id="IPR023214">
    <property type="entry name" value="HAD_sf"/>
</dbReference>
<dbReference type="InterPro" id="IPR006391">
    <property type="entry name" value="P-type_ATPase_bsu_IA"/>
</dbReference>
<dbReference type="InterPro" id="IPR001757">
    <property type="entry name" value="P_typ_ATPase"/>
</dbReference>
<dbReference type="InterPro" id="IPR044492">
    <property type="entry name" value="P_typ_ATPase_HD_dom"/>
</dbReference>
<dbReference type="NCBIfam" id="TIGR01494">
    <property type="entry name" value="ATPase_P-type"/>
    <property type="match status" value="1"/>
</dbReference>
<dbReference type="NCBIfam" id="TIGR01497">
    <property type="entry name" value="kdpB"/>
    <property type="match status" value="1"/>
</dbReference>
<dbReference type="NCBIfam" id="NF010609">
    <property type="entry name" value="PRK14010.1"/>
    <property type="match status" value="1"/>
</dbReference>
<dbReference type="PANTHER" id="PTHR43743">
    <property type="entry name" value="POTASSIUM-TRANSPORTING ATPASE ATP-BINDING SUBUNIT"/>
    <property type="match status" value="1"/>
</dbReference>
<dbReference type="PANTHER" id="PTHR43743:SF1">
    <property type="entry name" value="POTASSIUM-TRANSPORTING ATPASE ATP-BINDING SUBUNIT"/>
    <property type="match status" value="1"/>
</dbReference>
<dbReference type="Pfam" id="PF00122">
    <property type="entry name" value="E1-E2_ATPase"/>
    <property type="match status" value="1"/>
</dbReference>
<dbReference type="Pfam" id="PF00702">
    <property type="entry name" value="Hydrolase"/>
    <property type="match status" value="1"/>
</dbReference>
<dbReference type="PRINTS" id="PR00119">
    <property type="entry name" value="CATATPASE"/>
</dbReference>
<dbReference type="SFLD" id="SFLDG00002">
    <property type="entry name" value="C1.7:_P-type_atpase_like"/>
    <property type="match status" value="1"/>
</dbReference>
<dbReference type="SFLD" id="SFLDF00027">
    <property type="entry name" value="p-type_atpase"/>
    <property type="match status" value="1"/>
</dbReference>
<dbReference type="SUPFAM" id="SSF81653">
    <property type="entry name" value="Calcium ATPase, transduction domain A"/>
    <property type="match status" value="1"/>
</dbReference>
<dbReference type="SUPFAM" id="SSF81665">
    <property type="entry name" value="Calcium ATPase, transmembrane domain M"/>
    <property type="match status" value="1"/>
</dbReference>
<dbReference type="SUPFAM" id="SSF56784">
    <property type="entry name" value="HAD-like"/>
    <property type="match status" value="1"/>
</dbReference>
<dbReference type="PROSITE" id="PS00154">
    <property type="entry name" value="ATPASE_E1_E2"/>
    <property type="match status" value="1"/>
</dbReference>
<comment type="function">
    <text evidence="1">Part of the high-affinity ATP-driven potassium transport (or Kdp) system, which catalyzes the hydrolysis of ATP coupled with the electrogenic transport of potassium into the cytoplasm. This subunit is responsible for energy coupling to the transport system and for the release of the potassium ions to the cytoplasm.</text>
</comment>
<comment type="catalytic activity">
    <reaction evidence="1">
        <text>K(+)(out) + ATP + H2O = K(+)(in) + ADP + phosphate + H(+)</text>
        <dbReference type="Rhea" id="RHEA:16777"/>
        <dbReference type="ChEBI" id="CHEBI:15377"/>
        <dbReference type="ChEBI" id="CHEBI:15378"/>
        <dbReference type="ChEBI" id="CHEBI:29103"/>
        <dbReference type="ChEBI" id="CHEBI:30616"/>
        <dbReference type="ChEBI" id="CHEBI:43474"/>
        <dbReference type="ChEBI" id="CHEBI:456216"/>
        <dbReference type="EC" id="7.2.2.6"/>
    </reaction>
    <physiologicalReaction direction="left-to-right" evidence="1">
        <dbReference type="Rhea" id="RHEA:16778"/>
    </physiologicalReaction>
</comment>
<comment type="subunit">
    <text evidence="1">The system is composed of three essential subunits: KdpA, KdpB and KdpC.</text>
</comment>
<comment type="subcellular location">
    <subcellularLocation>
        <location evidence="1">Cell membrane</location>
        <topology evidence="1">Multi-pass membrane protein</topology>
    </subcellularLocation>
</comment>
<comment type="similarity">
    <text evidence="1">Belongs to the cation transport ATPase (P-type) (TC 3.A.3) family. Type IA subfamily.</text>
</comment>
<organism>
    <name type="scientific">Staphylococcus epidermidis (strain ATCC 35984 / DSM 28319 / BCRC 17069 / CCUG 31568 / BM 3577 / RP62A)</name>
    <dbReference type="NCBI Taxonomy" id="176279"/>
    <lineage>
        <taxon>Bacteria</taxon>
        <taxon>Bacillati</taxon>
        <taxon>Bacillota</taxon>
        <taxon>Bacilli</taxon>
        <taxon>Bacillales</taxon>
        <taxon>Staphylococcaceae</taxon>
        <taxon>Staphylococcus</taxon>
    </lineage>
</organism>
<name>KDPB_STAEQ</name>
<sequence>MAETTKIFESHLVKQALKDSVLKLYPVYMIKNPIMFVVEVGMLLALGLTIYPDLFHQESVSRLYVFSIFIILLLTLVFANFSEALAEGRGKAQANALRQTQTEMKARRIKQDGSYEMIDASDLKKGHIVRVATGEQIPNDGKVIKGLATVDESAITGESAPVIKESGGDFDNVIGGTSVASDWLEVEITSEPGHSFLDKMIGLVEGATRKKTPNEIALFTLLMTLTIIFLVVILTMYPLAKFLNFNLSIAMLIALAVCLIPTTIGGLLSAIGIAGMDRVTQFNILAKSGRSVETCGDVNVLILDKTGTITYGNRMADAFIPVKSSSFERLVKAAYESSIADDTPEGRSIVKLAYKQHIDLPQEVGEYIPFTAETRMSGVKFTTREVYKGAPNSMVKRVKEAGGHIPVDLDALVKGVSKKGGTPLVVLEDNEILGVIYLKDVIKDGLVERFRELREMGIETVMCTGDNELTAATIAKEAGVDRFVAECKPEDKINVIREEQAKGHIVAMTGDGTNDAPALAEANVGLAMNSGTMSAKEAANLIDLDSNPTKLMEVVLIGKQLLMTRGSLTTFSIANDIAKYFAILPAMFMAAMPAMNHLNIMHLHSPESAVLSALIFNALIIVLLIPIAMKGVKFKGASTQTILMKNMLVYGLGGMIVPFIGIKLIDLIIQLFV</sequence>
<reference key="1">
    <citation type="journal article" date="2005" name="J. Bacteriol.">
        <title>Insights on evolution of virulence and resistance from the complete genome analysis of an early methicillin-resistant Staphylococcus aureus strain and a biofilm-producing methicillin-resistant Staphylococcus epidermidis strain.</title>
        <authorList>
            <person name="Gill S.R."/>
            <person name="Fouts D.E."/>
            <person name="Archer G.L."/>
            <person name="Mongodin E.F."/>
            <person name="DeBoy R.T."/>
            <person name="Ravel J."/>
            <person name="Paulsen I.T."/>
            <person name="Kolonay J.F."/>
            <person name="Brinkac L.M."/>
            <person name="Beanan M.J."/>
            <person name="Dodson R.J."/>
            <person name="Daugherty S.C."/>
            <person name="Madupu R."/>
            <person name="Angiuoli S.V."/>
            <person name="Durkin A.S."/>
            <person name="Haft D.H."/>
            <person name="Vamathevan J.J."/>
            <person name="Khouri H."/>
            <person name="Utterback T.R."/>
            <person name="Lee C."/>
            <person name="Dimitrov G."/>
            <person name="Jiang L."/>
            <person name="Qin H."/>
            <person name="Weidman J."/>
            <person name="Tran K."/>
            <person name="Kang K.H."/>
            <person name="Hance I.R."/>
            <person name="Nelson K.E."/>
            <person name="Fraser C.M."/>
        </authorList>
    </citation>
    <scope>NUCLEOTIDE SEQUENCE [LARGE SCALE GENOMIC DNA]</scope>
    <source>
        <strain>ATCC 35984 / DSM 28319 / BCRC 17069 / CCUG 31568 / BM 3577 / RP62A</strain>
    </source>
</reference>
<protein>
    <recommendedName>
        <fullName evidence="1">Potassium-transporting ATPase ATP-binding subunit</fullName>
        <ecNumber evidence="1">7.2.2.6</ecNumber>
    </recommendedName>
    <alternativeName>
        <fullName evidence="1">ATP phosphohydrolase [potassium-transporting] B chain</fullName>
    </alternativeName>
    <alternativeName>
        <fullName evidence="1">Potassium-binding and translocating subunit B</fullName>
    </alternativeName>
    <alternativeName>
        <fullName evidence="1">Potassium-translocating ATPase B chain</fullName>
    </alternativeName>
</protein>
<gene>
    <name evidence="1" type="primary">kdpB</name>
    <name type="ordered locus">SERP2486</name>
</gene>
<proteinExistence type="inferred from homology"/>
<feature type="chain" id="PRO_0000046143" description="Potassium-transporting ATPase ATP-binding subunit">
    <location>
        <begin position="1"/>
        <end position="673"/>
    </location>
</feature>
<feature type="transmembrane region" description="Helical" evidence="1">
    <location>
        <begin position="34"/>
        <end position="54"/>
    </location>
</feature>
<feature type="transmembrane region" description="Helical" evidence="1">
    <location>
        <begin position="65"/>
        <end position="85"/>
    </location>
</feature>
<feature type="transmembrane region" description="Helical" evidence="1">
    <location>
        <begin position="216"/>
        <end position="236"/>
    </location>
</feature>
<feature type="transmembrane region" description="Helical" evidence="1">
    <location>
        <begin position="253"/>
        <end position="273"/>
    </location>
</feature>
<feature type="transmembrane region" description="Helical" evidence="1">
    <location>
        <begin position="581"/>
        <end position="601"/>
    </location>
</feature>
<feature type="transmembrane region" description="Helical" evidence="1">
    <location>
        <begin position="609"/>
        <end position="629"/>
    </location>
</feature>
<feature type="transmembrane region" description="Helical" evidence="1">
    <location>
        <begin position="649"/>
        <end position="669"/>
    </location>
</feature>
<feature type="active site" description="4-aspartylphosphate intermediate" evidence="1">
    <location>
        <position position="304"/>
    </location>
</feature>
<feature type="binding site" evidence="1">
    <location>
        <position position="341"/>
    </location>
    <ligand>
        <name>ATP</name>
        <dbReference type="ChEBI" id="CHEBI:30616"/>
    </ligand>
</feature>
<feature type="binding site" evidence="1">
    <location>
        <position position="345"/>
    </location>
    <ligand>
        <name>ATP</name>
        <dbReference type="ChEBI" id="CHEBI:30616"/>
    </ligand>
</feature>
<feature type="binding site" evidence="1">
    <location>
        <begin position="370"/>
        <end position="377"/>
    </location>
    <ligand>
        <name>ATP</name>
        <dbReference type="ChEBI" id="CHEBI:30616"/>
    </ligand>
</feature>
<feature type="binding site" evidence="1">
    <location>
        <position position="388"/>
    </location>
    <ligand>
        <name>ATP</name>
        <dbReference type="ChEBI" id="CHEBI:30616"/>
    </ligand>
</feature>
<feature type="binding site" evidence="1">
    <location>
        <position position="511"/>
    </location>
    <ligand>
        <name>Mg(2+)</name>
        <dbReference type="ChEBI" id="CHEBI:18420"/>
    </ligand>
</feature>
<feature type="binding site" evidence="1">
    <location>
        <position position="515"/>
    </location>
    <ligand>
        <name>Mg(2+)</name>
        <dbReference type="ChEBI" id="CHEBI:18420"/>
    </ligand>
</feature>
<evidence type="ECO:0000255" key="1">
    <source>
        <dbReference type="HAMAP-Rule" id="MF_00285"/>
    </source>
</evidence>
<accession>Q5HK64</accession>